<protein>
    <recommendedName>
        <fullName>Synaptosomal-associated protein 25</fullName>
        <shortName>SNAP-25</shortName>
    </recommendedName>
    <alternativeName>
        <fullName>Synaptosomal-associated 25 kDa protein</fullName>
    </alternativeName>
</protein>
<comment type="function">
    <text evidence="4">t-SNARE involved in the molecular regulation of neurotransmitter release. May play an important role in the synaptic function of specific neuronal systems. Associates with proteins involved in vesicle docking and membrane fusion. Regulates plasma membrane recycling through its interaction with CENPF. Modulates the gating characteristics of the delayed rectifier voltage-dependent potassium channel KCNB1 in pancreatic beta cells.</text>
</comment>
<comment type="subunit">
    <text evidence="2 4 5">Part of the SNARE core complex containing SNAP25, VAMP2 and STX1A; this complex constitutes the basic catalytic machinery of the complex neurotransmitter release apparatus (By similarity). Recruited to the SNARE complex following binding of the SNARE complex component STX1A to STXBP1 (By similarity). This complex binds CPLX1. Found in a complex containing SYT1, SV2B and syntaxin-1. Found in a ternary complex with STX1A and VAMP8 (By similarity). Interacts with HSC70 and with SYT9, forming a complex with DNAJC5 (By similarity). The interaction with SYT9 is inhibited in presence of calcium (By similarity). Isoform 1 and isoform 2 interact with BLOC1S6. Interacts with CENPF. Interacts with EQTN. Interacts with HGS. Interacts with KCNB1 (via N-terminus); reduces the voltage-dependent potassium channel KCNB1 activity in pancreatic beta cells. Interacts with OTOF. Interacts with RIMS1. Interacts with SNAPIN. Interacts with STXBP6. Interacts with TRIM9. Interacts with ZDHHC13 (via ANK repeats). Interacts with ZDHHC17 (via ANK repeats). Associates with the BLOC-1 complex (By similarity). Interacts with PLCL1 (via C2 domain) (By similarity). Interacts with PRRT2; this interaction may impair the formation of the SNARE complex (By similarity). Interacts with alpha-synuclein/SNCA (By similarity). Interacts with PRPH2 (By similarity). Interacts with ROM1 (By similarity). Interacts with STX3 (By similarity).</text>
</comment>
<comment type="subcellular location">
    <subcellularLocation>
        <location evidence="2">Cytoplasm</location>
        <location evidence="2">Perinuclear region</location>
    </subcellularLocation>
    <subcellularLocation>
        <location evidence="4">Cell membrane</location>
        <topology evidence="2">Lipid-anchor</topology>
    </subcellularLocation>
    <subcellularLocation>
        <location evidence="2">Synapse</location>
        <location evidence="2">Synaptosome</location>
    </subcellularLocation>
    <subcellularLocation>
        <location evidence="2">Photoreceptor inner segment</location>
    </subcellularLocation>
    <text evidence="2 4">Membrane association requires palmitoylation. Expressed throughout cytoplasm, concentrating at the perinuclear region. Colocalizes with KCNB1 at the cell membrane (By similarity). Colocalizes with PLCL1 at the cell membrane (By similarity).</text>
</comment>
<comment type="PTM">
    <text evidence="2">Palmitoylated. Cys-85 appears to be the main site, and palmitoylation is required for membrane association (By similarity).</text>
</comment>
<comment type="similarity">
    <text evidence="8">Belongs to the SNAP-25 family.</text>
</comment>
<sequence length="206" mass="23315">MAEDADMRNELEEMQRRADQLADESLESTRRMLQLVEESKDAGIRTLVMLDEQGEQLERIEEGMDQINKDMKEAEKNLTDLGKFCGLCVCPCNKLKSSDAYKKAWGNNQDGVVASQPARVVDEREQMAISGGFIRRVTNDARENEMDENLEQVSGIIGNLRHMALDMGNEIDTQNRQIDRIMEKADSNKTRIDEANQRATKMLGSG</sequence>
<organism>
    <name type="scientific">Macaca mulatta</name>
    <name type="common">Rhesus macaque</name>
    <dbReference type="NCBI Taxonomy" id="9544"/>
    <lineage>
        <taxon>Eukaryota</taxon>
        <taxon>Metazoa</taxon>
        <taxon>Chordata</taxon>
        <taxon>Craniata</taxon>
        <taxon>Vertebrata</taxon>
        <taxon>Euteleostomi</taxon>
        <taxon>Mammalia</taxon>
        <taxon>Eutheria</taxon>
        <taxon>Euarchontoglires</taxon>
        <taxon>Primates</taxon>
        <taxon>Haplorrhini</taxon>
        <taxon>Catarrhini</taxon>
        <taxon>Cercopithecidae</taxon>
        <taxon>Cercopithecinae</taxon>
        <taxon>Macaca</taxon>
    </lineage>
</organism>
<reference key="1">
    <citation type="submission" date="2000-03" db="EMBL/GenBank/DDBJ databases">
        <authorList>
            <person name="Jensen M.J."/>
            <person name="Smith L.A."/>
        </authorList>
    </citation>
    <scope>NUCLEOTIDE SEQUENCE [MRNA]</scope>
    <source>
        <tissue>Hippocampus</tissue>
    </source>
</reference>
<feature type="chain" id="PRO_0000213588" description="Synaptosomal-associated protein 25">
    <location>
        <begin position="1"/>
        <end position="206"/>
    </location>
</feature>
<feature type="domain" description="t-SNARE coiled-coil homology 1" evidence="6">
    <location>
        <begin position="19"/>
        <end position="81"/>
    </location>
</feature>
<feature type="domain" description="t-SNARE coiled-coil homology 2" evidence="6">
    <location>
        <begin position="140"/>
        <end position="202"/>
    </location>
</feature>
<feature type="region of interest" description="Interaction with CENPF" evidence="1">
    <location>
        <begin position="1"/>
        <end position="75"/>
    </location>
</feature>
<feature type="region of interest" description="Disordered" evidence="7">
    <location>
        <begin position="1"/>
        <end position="23"/>
    </location>
</feature>
<feature type="region of interest" description="Interaction with ZDHHC17" evidence="3">
    <location>
        <begin position="111"/>
        <end position="120"/>
    </location>
</feature>
<feature type="compositionally biased region" description="Basic and acidic residues" evidence="7">
    <location>
        <begin position="1"/>
        <end position="20"/>
    </location>
</feature>
<feature type="modified residue" description="Phosphothreonine" evidence="2">
    <location>
        <position position="138"/>
    </location>
</feature>
<feature type="modified residue" description="Phosphoserine" evidence="2">
    <location>
        <position position="154"/>
    </location>
</feature>
<feature type="modified residue" description="Phosphoserine" evidence="2">
    <location>
        <position position="187"/>
    </location>
</feature>
<feature type="lipid moiety-binding region" description="S-palmitoyl cysteine" evidence="2">
    <location>
        <position position="85"/>
    </location>
</feature>
<feature type="lipid moiety-binding region" description="S-palmitoyl cysteine" evidence="2">
    <location>
        <position position="88"/>
    </location>
</feature>
<feature type="lipid moiety-binding region" description="S-palmitoyl cysteine" evidence="2">
    <location>
        <position position="90"/>
    </location>
</feature>
<feature type="lipid moiety-binding region" description="S-palmitoyl cysteine" evidence="2">
    <location>
        <position position="92"/>
    </location>
</feature>
<gene>
    <name type="primary">SNAP25</name>
</gene>
<evidence type="ECO:0000250" key="1"/>
<evidence type="ECO:0000250" key="2">
    <source>
        <dbReference type="UniProtKB" id="P60879"/>
    </source>
</evidence>
<evidence type="ECO:0000250" key="3">
    <source>
        <dbReference type="UniProtKB" id="P60880"/>
    </source>
</evidence>
<evidence type="ECO:0000250" key="4">
    <source>
        <dbReference type="UniProtKB" id="P60881"/>
    </source>
</evidence>
<evidence type="ECO:0000250" key="5">
    <source>
        <dbReference type="UniProtKB" id="Q17QQ3"/>
    </source>
</evidence>
<evidence type="ECO:0000255" key="6">
    <source>
        <dbReference type="PROSITE-ProRule" id="PRU00202"/>
    </source>
</evidence>
<evidence type="ECO:0000256" key="7">
    <source>
        <dbReference type="SAM" id="MobiDB-lite"/>
    </source>
</evidence>
<evidence type="ECO:0000305" key="8"/>
<accession>P60877</accession>
<accession>P13795</accession>
<accession>P36974</accession>
<accession>P70557</accession>
<accession>P70558</accession>
<accession>Q8IXK3</accession>
<accession>Q96FM2</accession>
<accession>Q9BR45</accession>
<keyword id="KW-1003">Cell membrane</keyword>
<keyword id="KW-0175">Coiled coil</keyword>
<keyword id="KW-0963">Cytoplasm</keyword>
<keyword id="KW-0449">Lipoprotein</keyword>
<keyword id="KW-0472">Membrane</keyword>
<keyword id="KW-0564">Palmitate</keyword>
<keyword id="KW-0597">Phosphoprotein</keyword>
<keyword id="KW-1185">Reference proteome</keyword>
<keyword id="KW-0677">Repeat</keyword>
<keyword id="KW-0770">Synapse</keyword>
<keyword id="KW-0771">Synaptosome</keyword>
<dbReference type="EMBL" id="AF240770">
    <property type="protein sequence ID" value="AAF64477.1"/>
    <property type="molecule type" value="mRNA"/>
</dbReference>
<dbReference type="RefSeq" id="NP_001028036.1">
    <property type="nucleotide sequence ID" value="NM_001032864.1"/>
</dbReference>
<dbReference type="RefSeq" id="XP_015004823.1">
    <property type="nucleotide sequence ID" value="XM_015149337.2"/>
</dbReference>
<dbReference type="BMRB" id="P60877"/>
<dbReference type="SMR" id="P60877"/>
<dbReference type="FunCoup" id="P60877">
    <property type="interactions" value="959"/>
</dbReference>
<dbReference type="STRING" id="9544.ENSMMUP00000063084"/>
<dbReference type="PaxDb" id="9544-ENSMMUP00000014487"/>
<dbReference type="Ensembl" id="ENSMMUT00000015467.4">
    <property type="protein sequence ID" value="ENSMMUP00000014487.2"/>
    <property type="gene ID" value="ENSMMUG00000011064.4"/>
</dbReference>
<dbReference type="Ensembl" id="ENSMMUT00000065548.2">
    <property type="protein sequence ID" value="ENSMMUP00000053161.2"/>
    <property type="gene ID" value="ENSMMUG00000011064.4"/>
</dbReference>
<dbReference type="Ensembl" id="ENSMMUT00000085469.1">
    <property type="protein sequence ID" value="ENSMMUP00000071592.1"/>
    <property type="gene ID" value="ENSMMUG00000011064.4"/>
</dbReference>
<dbReference type="Ensembl" id="ENSMMUT00000085731.1">
    <property type="protein sequence ID" value="ENSMMUP00000066077.1"/>
    <property type="gene ID" value="ENSMMUG00000011064.4"/>
</dbReference>
<dbReference type="Ensembl" id="ENSMMUT00000087428.1">
    <property type="protein sequence ID" value="ENSMMUP00000063084.1"/>
    <property type="gene ID" value="ENSMMUG00000011064.4"/>
</dbReference>
<dbReference type="Ensembl" id="ENSMMUT00000097476.1">
    <property type="protein sequence ID" value="ENSMMUP00000079299.1"/>
    <property type="gene ID" value="ENSMMUG00000011064.4"/>
</dbReference>
<dbReference type="Ensembl" id="ENSMMUT00000100536.1">
    <property type="protein sequence ID" value="ENSMMUP00000075790.1"/>
    <property type="gene ID" value="ENSMMUG00000011064.4"/>
</dbReference>
<dbReference type="Ensembl" id="ENSMMUT00000103515.1">
    <property type="protein sequence ID" value="ENSMMUP00000062488.1"/>
    <property type="gene ID" value="ENSMMUG00000011064.4"/>
</dbReference>
<dbReference type="GeneID" id="574204"/>
<dbReference type="KEGG" id="mcc:574204"/>
<dbReference type="CTD" id="6616"/>
<dbReference type="VEuPathDB" id="HostDB:ENSMMUG00000011064"/>
<dbReference type="VGNC" id="VGNC:77663">
    <property type="gene designation" value="SNAP25"/>
</dbReference>
<dbReference type="eggNOG" id="KOG3065">
    <property type="taxonomic scope" value="Eukaryota"/>
</dbReference>
<dbReference type="GeneTree" id="ENSGT00950000182843"/>
<dbReference type="HOGENOM" id="CLU_096939_0_0_1"/>
<dbReference type="InParanoid" id="P60877"/>
<dbReference type="OMA" id="GMIQINE"/>
<dbReference type="OrthoDB" id="19261at2759"/>
<dbReference type="TreeFam" id="TF315125"/>
<dbReference type="Proteomes" id="UP000006718">
    <property type="component" value="Chromosome 10"/>
</dbReference>
<dbReference type="Bgee" id="ENSMMUG00000011064">
    <property type="expression patterns" value="Expressed in prefrontal cortex and 21 other cell types or tissues"/>
</dbReference>
<dbReference type="ExpressionAtlas" id="P60877">
    <property type="expression patterns" value="baseline"/>
</dbReference>
<dbReference type="GO" id="GO:0030424">
    <property type="term" value="C:axon"/>
    <property type="evidence" value="ECO:0007669"/>
    <property type="project" value="Ensembl"/>
</dbReference>
<dbReference type="GO" id="GO:0031083">
    <property type="term" value="C:BLOC-1 complex"/>
    <property type="evidence" value="ECO:0007669"/>
    <property type="project" value="Ensembl"/>
</dbReference>
<dbReference type="GO" id="GO:0005938">
    <property type="term" value="C:cell cortex"/>
    <property type="evidence" value="ECO:0007669"/>
    <property type="project" value="Ensembl"/>
</dbReference>
<dbReference type="GO" id="GO:0005737">
    <property type="term" value="C:cytoplasm"/>
    <property type="evidence" value="ECO:0000250"/>
    <property type="project" value="UniProtKB"/>
</dbReference>
<dbReference type="GO" id="GO:0005856">
    <property type="term" value="C:cytoskeleton"/>
    <property type="evidence" value="ECO:0007669"/>
    <property type="project" value="Ensembl"/>
</dbReference>
<dbReference type="GO" id="GO:0098978">
    <property type="term" value="C:glutamatergic synapse"/>
    <property type="evidence" value="ECO:0007669"/>
    <property type="project" value="Ensembl"/>
</dbReference>
<dbReference type="GO" id="GO:0016020">
    <property type="term" value="C:membrane"/>
    <property type="evidence" value="ECO:0000250"/>
    <property type="project" value="UniProtKB"/>
</dbReference>
<dbReference type="GO" id="GO:0048471">
    <property type="term" value="C:perinuclear region of cytoplasm"/>
    <property type="evidence" value="ECO:0007669"/>
    <property type="project" value="UniProtKB-SubCell"/>
</dbReference>
<dbReference type="GO" id="GO:0001917">
    <property type="term" value="C:photoreceptor inner segment"/>
    <property type="evidence" value="ECO:0007669"/>
    <property type="project" value="UniProtKB-SubCell"/>
</dbReference>
<dbReference type="GO" id="GO:0005886">
    <property type="term" value="C:plasma membrane"/>
    <property type="evidence" value="ECO:0000318"/>
    <property type="project" value="GO_Central"/>
</dbReference>
<dbReference type="GO" id="GO:0042734">
    <property type="term" value="C:presynaptic membrane"/>
    <property type="evidence" value="ECO:0007669"/>
    <property type="project" value="Ensembl"/>
</dbReference>
<dbReference type="GO" id="GO:0097470">
    <property type="term" value="C:ribbon synapse"/>
    <property type="evidence" value="ECO:0007669"/>
    <property type="project" value="Ensembl"/>
</dbReference>
<dbReference type="GO" id="GO:0031201">
    <property type="term" value="C:SNARE complex"/>
    <property type="evidence" value="ECO:0000250"/>
    <property type="project" value="UniProtKB"/>
</dbReference>
<dbReference type="GO" id="GO:0036477">
    <property type="term" value="C:somatodendritic compartment"/>
    <property type="evidence" value="ECO:0007669"/>
    <property type="project" value="Ensembl"/>
</dbReference>
<dbReference type="GO" id="GO:0008021">
    <property type="term" value="C:synaptic vesicle"/>
    <property type="evidence" value="ECO:0007669"/>
    <property type="project" value="Ensembl"/>
</dbReference>
<dbReference type="GO" id="GO:0070032">
    <property type="term" value="C:synaptobrevin 2-SNAP-25-syntaxin-1a-complexin I complex"/>
    <property type="evidence" value="ECO:0000318"/>
    <property type="project" value="GO_Central"/>
</dbReference>
<dbReference type="GO" id="GO:0005802">
    <property type="term" value="C:trans-Golgi network"/>
    <property type="evidence" value="ECO:0007669"/>
    <property type="project" value="Ensembl"/>
</dbReference>
<dbReference type="GO" id="GO:0005484">
    <property type="term" value="F:SNAP receptor activity"/>
    <property type="evidence" value="ECO:0000318"/>
    <property type="project" value="GO_Central"/>
</dbReference>
<dbReference type="GO" id="GO:0017075">
    <property type="term" value="F:syntaxin-1 binding"/>
    <property type="evidence" value="ECO:0000318"/>
    <property type="project" value="GO_Central"/>
</dbReference>
<dbReference type="GO" id="GO:0005249">
    <property type="term" value="F:voltage-gated potassium channel activity"/>
    <property type="evidence" value="ECO:0007669"/>
    <property type="project" value="InterPro"/>
</dbReference>
<dbReference type="GO" id="GO:0008306">
    <property type="term" value="P:associative learning"/>
    <property type="evidence" value="ECO:0007669"/>
    <property type="project" value="Ensembl"/>
</dbReference>
<dbReference type="GO" id="GO:0006887">
    <property type="term" value="P:exocytosis"/>
    <property type="evidence" value="ECO:0000318"/>
    <property type="project" value="GO_Central"/>
</dbReference>
<dbReference type="GO" id="GO:0007626">
    <property type="term" value="P:locomotory behavior"/>
    <property type="evidence" value="ECO:0007669"/>
    <property type="project" value="Ensembl"/>
</dbReference>
<dbReference type="GO" id="GO:0060291">
    <property type="term" value="P:long-term synaptic potentiation"/>
    <property type="evidence" value="ECO:0007669"/>
    <property type="project" value="Ensembl"/>
</dbReference>
<dbReference type="GO" id="GO:0099525">
    <property type="term" value="P:presynaptic dense core vesicle exocytosis"/>
    <property type="evidence" value="ECO:0007669"/>
    <property type="project" value="Ensembl"/>
</dbReference>
<dbReference type="GO" id="GO:0070201">
    <property type="term" value="P:regulation of establishment of protein localization"/>
    <property type="evidence" value="ECO:0007669"/>
    <property type="project" value="Ensembl"/>
</dbReference>
<dbReference type="GO" id="GO:0010975">
    <property type="term" value="P:regulation of neuron projection development"/>
    <property type="evidence" value="ECO:0007669"/>
    <property type="project" value="Ensembl"/>
</dbReference>
<dbReference type="GO" id="GO:0031629">
    <property type="term" value="P:synaptic vesicle fusion to presynaptic active zone membrane"/>
    <property type="evidence" value="ECO:0000318"/>
    <property type="project" value="GO_Central"/>
</dbReference>
<dbReference type="GO" id="GO:0016082">
    <property type="term" value="P:synaptic vesicle priming"/>
    <property type="evidence" value="ECO:0000318"/>
    <property type="project" value="GO_Central"/>
</dbReference>
<dbReference type="CDD" id="cd15885">
    <property type="entry name" value="SNARE_SNAP25C"/>
    <property type="match status" value="1"/>
</dbReference>
<dbReference type="CDD" id="cd15894">
    <property type="entry name" value="SNARE_SNAP25N"/>
    <property type="match status" value="1"/>
</dbReference>
<dbReference type="FunFam" id="1.20.5.110:FF:000007">
    <property type="entry name" value="Synaptosomal-associated protein"/>
    <property type="match status" value="1"/>
</dbReference>
<dbReference type="FunFam" id="1.20.5.110:FF:000009">
    <property type="entry name" value="Synaptosomal-associated protein"/>
    <property type="match status" value="1"/>
</dbReference>
<dbReference type="Gene3D" id="1.20.5.110">
    <property type="match status" value="2"/>
</dbReference>
<dbReference type="InterPro" id="IPR000928">
    <property type="entry name" value="SNAP-25_dom"/>
</dbReference>
<dbReference type="InterPro" id="IPR039077">
    <property type="entry name" value="SNAP-25_N_SNARE_chord"/>
</dbReference>
<dbReference type="InterPro" id="IPR000727">
    <property type="entry name" value="T_SNARE_dom"/>
</dbReference>
<dbReference type="PANTHER" id="PTHR19305">
    <property type="entry name" value="SYNAPTOSOMAL ASSOCIATED PROTEIN"/>
    <property type="match status" value="1"/>
</dbReference>
<dbReference type="PANTHER" id="PTHR19305:SF5">
    <property type="entry name" value="SYNAPTOSOMAL-ASSOCIATED PROTEIN 25"/>
    <property type="match status" value="1"/>
</dbReference>
<dbReference type="Pfam" id="PF00835">
    <property type="entry name" value="SNAP-25"/>
    <property type="match status" value="1"/>
</dbReference>
<dbReference type="SMART" id="SM00397">
    <property type="entry name" value="t_SNARE"/>
    <property type="match status" value="2"/>
</dbReference>
<dbReference type="SUPFAM" id="SSF58038">
    <property type="entry name" value="SNARE fusion complex"/>
    <property type="match status" value="2"/>
</dbReference>
<dbReference type="PROSITE" id="PS50192">
    <property type="entry name" value="T_SNARE"/>
    <property type="match status" value="2"/>
</dbReference>
<name>SNP25_MACMU</name>
<proteinExistence type="evidence at transcript level"/>